<protein>
    <recommendedName>
        <fullName>Pulcherriminic acid synthase</fullName>
        <ecNumber>1.14.15.13</ecNumber>
    </recommendedName>
    <alternativeName>
        <fullName>CYP134A1</fullName>
    </alternativeName>
    <alternativeName>
        <fullName>Cyclo-L-leucyl-L-leucyl dipeptide oxidase</fullName>
    </alternativeName>
    <alternativeName>
        <fullName>Cytochrome P450 CypX</fullName>
    </alternativeName>
</protein>
<keyword id="KW-0002">3D-structure</keyword>
<keyword id="KW-0349">Heme</keyword>
<keyword id="KW-0408">Iron</keyword>
<keyword id="KW-0479">Metal-binding</keyword>
<keyword id="KW-0503">Monooxygenase</keyword>
<keyword id="KW-0560">Oxidoreductase</keyword>
<keyword id="KW-1185">Reference proteome</keyword>
<proteinExistence type="evidence at protein level"/>
<dbReference type="EC" id="1.14.15.13"/>
<dbReference type="EMBL" id="AF017113">
    <property type="protein sequence ID" value="AAC67280.1"/>
    <property type="molecule type" value="Genomic_DNA"/>
</dbReference>
<dbReference type="EMBL" id="AL009126">
    <property type="protein sequence ID" value="CAB15511.1"/>
    <property type="molecule type" value="Genomic_DNA"/>
</dbReference>
<dbReference type="PIR" id="F69611">
    <property type="entry name" value="F69611"/>
</dbReference>
<dbReference type="RefSeq" id="NP_391386.1">
    <property type="nucleotide sequence ID" value="NC_000964.3"/>
</dbReference>
<dbReference type="RefSeq" id="WP_003244436.1">
    <property type="nucleotide sequence ID" value="NZ_OZ025638.1"/>
</dbReference>
<dbReference type="PDB" id="3NC3">
    <property type="method" value="X-ray"/>
    <property type="resolution" value="2.66 A"/>
    <property type="chains" value="A/B=1-405"/>
</dbReference>
<dbReference type="PDB" id="3NC5">
    <property type="method" value="X-ray"/>
    <property type="resolution" value="2.90 A"/>
    <property type="chains" value="A/B=1-405"/>
</dbReference>
<dbReference type="PDB" id="3NC6">
    <property type="method" value="X-ray"/>
    <property type="resolution" value="3.10 A"/>
    <property type="chains" value="A/B=1-405"/>
</dbReference>
<dbReference type="PDB" id="3NC7">
    <property type="method" value="X-ray"/>
    <property type="resolution" value="3.30 A"/>
    <property type="chains" value="A/B=1-405"/>
</dbReference>
<dbReference type="PDBsum" id="3NC3"/>
<dbReference type="PDBsum" id="3NC5"/>
<dbReference type="PDBsum" id="3NC6"/>
<dbReference type="PDBsum" id="3NC7"/>
<dbReference type="SMR" id="O34926"/>
<dbReference type="FunCoup" id="O34926">
    <property type="interactions" value="106"/>
</dbReference>
<dbReference type="STRING" id="224308.BSU35060"/>
<dbReference type="jPOST" id="O34926"/>
<dbReference type="PaxDb" id="224308-BSU35060"/>
<dbReference type="EnsemblBacteria" id="CAB15511">
    <property type="protein sequence ID" value="CAB15511"/>
    <property type="gene ID" value="BSU_35060"/>
</dbReference>
<dbReference type="GeneID" id="936624"/>
<dbReference type="KEGG" id="bsu:BSU35060"/>
<dbReference type="PATRIC" id="fig|224308.179.peg.3795"/>
<dbReference type="eggNOG" id="COG2124">
    <property type="taxonomic scope" value="Bacteria"/>
</dbReference>
<dbReference type="InParanoid" id="O34926"/>
<dbReference type="OrthoDB" id="3861479at2"/>
<dbReference type="PhylomeDB" id="O34926"/>
<dbReference type="BioCyc" id="BSUB:BSU35060-MONOMER"/>
<dbReference type="BioCyc" id="MetaCyc:BSU35060-MONOMER"/>
<dbReference type="BRENDA" id="1.14.15.13">
    <property type="organism ID" value="658"/>
</dbReference>
<dbReference type="EvolutionaryTrace" id="O34926"/>
<dbReference type="Proteomes" id="UP000001570">
    <property type="component" value="Chromosome"/>
</dbReference>
<dbReference type="GO" id="GO:0020037">
    <property type="term" value="F:heme binding"/>
    <property type="evidence" value="ECO:0000314"/>
    <property type="project" value="UniProtKB"/>
</dbReference>
<dbReference type="GO" id="GO:0005506">
    <property type="term" value="F:iron ion binding"/>
    <property type="evidence" value="ECO:0000314"/>
    <property type="project" value="UniProtKB"/>
</dbReference>
<dbReference type="GO" id="GO:0004497">
    <property type="term" value="F:monooxygenase activity"/>
    <property type="evidence" value="ECO:0000318"/>
    <property type="project" value="GO_Central"/>
</dbReference>
<dbReference type="GO" id="GO:0016713">
    <property type="term" value="F:oxidoreductase activity, acting on paired donors, with incorporation or reduction of molecular oxygen, reduced iron-sulfur protein as one donor, and incorporation of one atom of oxygen"/>
    <property type="evidence" value="ECO:0000314"/>
    <property type="project" value="UniProtKB"/>
</dbReference>
<dbReference type="GO" id="GO:0046148">
    <property type="term" value="P:pigment biosynthetic process"/>
    <property type="evidence" value="ECO:0000314"/>
    <property type="project" value="UniProtKB"/>
</dbReference>
<dbReference type="CDD" id="cd11080">
    <property type="entry name" value="CYP134A1"/>
    <property type="match status" value="1"/>
</dbReference>
<dbReference type="Gene3D" id="1.10.630.10">
    <property type="entry name" value="Cytochrome P450"/>
    <property type="match status" value="1"/>
</dbReference>
<dbReference type="InterPro" id="IPR030904">
    <property type="entry name" value="CypX"/>
</dbReference>
<dbReference type="InterPro" id="IPR001128">
    <property type="entry name" value="Cyt_P450"/>
</dbReference>
<dbReference type="InterPro" id="IPR002397">
    <property type="entry name" value="Cyt_P450_B"/>
</dbReference>
<dbReference type="InterPro" id="IPR017972">
    <property type="entry name" value="Cyt_P450_CS"/>
</dbReference>
<dbReference type="InterPro" id="IPR036396">
    <property type="entry name" value="Cyt_P450_sf"/>
</dbReference>
<dbReference type="NCBIfam" id="TIGR04538">
    <property type="entry name" value="P450_cycloAA_1"/>
    <property type="match status" value="1"/>
</dbReference>
<dbReference type="PANTHER" id="PTHR46696">
    <property type="entry name" value="P450, PUTATIVE (EUROFUNG)-RELATED"/>
    <property type="match status" value="1"/>
</dbReference>
<dbReference type="PANTHER" id="PTHR46696:SF3">
    <property type="entry name" value="PULCHERRIMINIC ACID SYNTHASE"/>
    <property type="match status" value="1"/>
</dbReference>
<dbReference type="Pfam" id="PF00067">
    <property type="entry name" value="p450"/>
    <property type="match status" value="1"/>
</dbReference>
<dbReference type="PRINTS" id="PR00359">
    <property type="entry name" value="BP450"/>
</dbReference>
<dbReference type="SUPFAM" id="SSF48264">
    <property type="entry name" value="Cytochrome P450"/>
    <property type="match status" value="1"/>
</dbReference>
<dbReference type="PROSITE" id="PS00086">
    <property type="entry name" value="CYTOCHROME_P450"/>
    <property type="match status" value="1"/>
</dbReference>
<comment type="function">
    <text evidence="1">Involved in the biosynthesis of pulcherrimin, a red extracellular pigment. Catalyzes the oxidation of cyclo(L-Leu-L-Leu) (cLL) to yield pulcherriminic acid which forms pulcherrimin via a nonenzymic reaction with Fe(3+). Substrates with small alkyl groups (cAA, cLG, cLP) exhibit weaker binding to CYP134A1, but substrates with larger hydrophobic side chains bind in a similar regime to cLL.</text>
</comment>
<comment type="catalytic activity">
    <reaction evidence="1">
        <text>cyclo(L-leucyl-L-leucyl) + 6 reduced [2Fe-2S]-[ferredoxin] + 3 O2 + 4 H(+) = pulcherriminic acid + 6 oxidized [2Fe-2S]-[ferredoxin] + 4 H2O</text>
        <dbReference type="Rhea" id="RHEA:35555"/>
        <dbReference type="Rhea" id="RHEA-COMP:10000"/>
        <dbReference type="Rhea" id="RHEA-COMP:10001"/>
        <dbReference type="ChEBI" id="CHEBI:15377"/>
        <dbReference type="ChEBI" id="CHEBI:15378"/>
        <dbReference type="ChEBI" id="CHEBI:15379"/>
        <dbReference type="ChEBI" id="CHEBI:33737"/>
        <dbReference type="ChEBI" id="CHEBI:33738"/>
        <dbReference type="ChEBI" id="CHEBI:67269"/>
        <dbReference type="ChEBI" id="CHEBI:77663"/>
        <dbReference type="EC" id="1.14.15.13"/>
    </reaction>
</comment>
<comment type="cofactor">
    <cofactor evidence="1">
        <name>heme</name>
        <dbReference type="ChEBI" id="CHEBI:30413"/>
    </cofactor>
</comment>
<comment type="subunit">
    <text evidence="1">Homodimer.</text>
</comment>
<comment type="similarity">
    <text evidence="2">Belongs to the cytochrome P450 family.</text>
</comment>
<gene>
    <name type="primary">cypX</name>
    <name type="synonym">cyp134</name>
    <name type="synonym">cypB</name>
    <name type="ordered locus">BSU35060</name>
</gene>
<sequence>MSQSIKLFSVLSDQFQNNPYAYFSQLREEDPVHYEESIDSYFISRYHDVRYILQHPDIFTTKSLVERAEPVMRGPVLAQMHGKEHSAKRRIVVRSFIGDALDHLSPLIKQNAENLLAPYLERGKSDLVNDFGKTFAVCVTMDMLGLDKRDHEKISEWHSGVADFITSISQSPEARAHSLWCSEQLSQYLMPVIKERRVNPGSDLISILCTSEYEGMALSDKDILALILNVLLAATEPADKTLALMIYHLLNNPEQMNDVLADRSLVPRAIAETLRYKPPVQLIPRQLSQDTVVGGMEIKKDTIVFCMIGAANRDPEAFEQPDVFNIHREDLGIKSAFSGAARHLAFGSGIHNCVGAAFAKNEIEIVANIVLDKMRNIRLEEDFCYAESGLYTRGPVSLLVAFDGA</sequence>
<name>CYPX_BACSU</name>
<organism>
    <name type="scientific">Bacillus subtilis (strain 168)</name>
    <dbReference type="NCBI Taxonomy" id="224308"/>
    <lineage>
        <taxon>Bacteria</taxon>
        <taxon>Bacillati</taxon>
        <taxon>Bacillota</taxon>
        <taxon>Bacilli</taxon>
        <taxon>Bacillales</taxon>
        <taxon>Bacillaceae</taxon>
        <taxon>Bacillus</taxon>
    </lineage>
</organism>
<reference key="1">
    <citation type="submission" date="1997-08" db="EMBL/GenBank/DDBJ databases">
        <title>Nucleotide sequence of the 300-304 chromosomal segment of Bacillus subtilis.</title>
        <authorList>
            <person name="Lazarevic V."/>
            <person name="Soldo B."/>
            <person name="Rivolta C."/>
            <person name="Reynolds S."/>
            <person name="Mauel C."/>
            <person name="Karamata D."/>
        </authorList>
    </citation>
    <scope>NUCLEOTIDE SEQUENCE [GENOMIC DNA]</scope>
</reference>
<reference key="2">
    <citation type="journal article" date="1997" name="Nature">
        <title>The complete genome sequence of the Gram-positive bacterium Bacillus subtilis.</title>
        <authorList>
            <person name="Kunst F."/>
            <person name="Ogasawara N."/>
            <person name="Moszer I."/>
            <person name="Albertini A.M."/>
            <person name="Alloni G."/>
            <person name="Azevedo V."/>
            <person name="Bertero M.G."/>
            <person name="Bessieres P."/>
            <person name="Bolotin A."/>
            <person name="Borchert S."/>
            <person name="Borriss R."/>
            <person name="Boursier L."/>
            <person name="Brans A."/>
            <person name="Braun M."/>
            <person name="Brignell S.C."/>
            <person name="Bron S."/>
            <person name="Brouillet S."/>
            <person name="Bruschi C.V."/>
            <person name="Caldwell B."/>
            <person name="Capuano V."/>
            <person name="Carter N.M."/>
            <person name="Choi S.-K."/>
            <person name="Codani J.-J."/>
            <person name="Connerton I.F."/>
            <person name="Cummings N.J."/>
            <person name="Daniel R.A."/>
            <person name="Denizot F."/>
            <person name="Devine K.M."/>
            <person name="Duesterhoeft A."/>
            <person name="Ehrlich S.D."/>
            <person name="Emmerson P.T."/>
            <person name="Entian K.-D."/>
            <person name="Errington J."/>
            <person name="Fabret C."/>
            <person name="Ferrari E."/>
            <person name="Foulger D."/>
            <person name="Fritz C."/>
            <person name="Fujita M."/>
            <person name="Fujita Y."/>
            <person name="Fuma S."/>
            <person name="Galizzi A."/>
            <person name="Galleron N."/>
            <person name="Ghim S.-Y."/>
            <person name="Glaser P."/>
            <person name="Goffeau A."/>
            <person name="Golightly E.J."/>
            <person name="Grandi G."/>
            <person name="Guiseppi G."/>
            <person name="Guy B.J."/>
            <person name="Haga K."/>
            <person name="Haiech J."/>
            <person name="Harwood C.R."/>
            <person name="Henaut A."/>
            <person name="Hilbert H."/>
            <person name="Holsappel S."/>
            <person name="Hosono S."/>
            <person name="Hullo M.-F."/>
            <person name="Itaya M."/>
            <person name="Jones L.-M."/>
            <person name="Joris B."/>
            <person name="Karamata D."/>
            <person name="Kasahara Y."/>
            <person name="Klaerr-Blanchard M."/>
            <person name="Klein C."/>
            <person name="Kobayashi Y."/>
            <person name="Koetter P."/>
            <person name="Koningstein G."/>
            <person name="Krogh S."/>
            <person name="Kumano M."/>
            <person name="Kurita K."/>
            <person name="Lapidus A."/>
            <person name="Lardinois S."/>
            <person name="Lauber J."/>
            <person name="Lazarevic V."/>
            <person name="Lee S.-M."/>
            <person name="Levine A."/>
            <person name="Liu H."/>
            <person name="Masuda S."/>
            <person name="Mauel C."/>
            <person name="Medigue C."/>
            <person name="Medina N."/>
            <person name="Mellado R.P."/>
            <person name="Mizuno M."/>
            <person name="Moestl D."/>
            <person name="Nakai S."/>
            <person name="Noback M."/>
            <person name="Noone D."/>
            <person name="O'Reilly M."/>
            <person name="Ogawa K."/>
            <person name="Ogiwara A."/>
            <person name="Oudega B."/>
            <person name="Park S.-H."/>
            <person name="Parro V."/>
            <person name="Pohl T.M."/>
            <person name="Portetelle D."/>
            <person name="Porwollik S."/>
            <person name="Prescott A.M."/>
            <person name="Presecan E."/>
            <person name="Pujic P."/>
            <person name="Purnelle B."/>
            <person name="Rapoport G."/>
            <person name="Rey M."/>
            <person name="Reynolds S."/>
            <person name="Rieger M."/>
            <person name="Rivolta C."/>
            <person name="Rocha E."/>
            <person name="Roche B."/>
            <person name="Rose M."/>
            <person name="Sadaie Y."/>
            <person name="Sato T."/>
            <person name="Scanlan E."/>
            <person name="Schleich S."/>
            <person name="Schroeter R."/>
            <person name="Scoffone F."/>
            <person name="Sekiguchi J."/>
            <person name="Sekowska A."/>
            <person name="Seror S.J."/>
            <person name="Serror P."/>
            <person name="Shin B.-S."/>
            <person name="Soldo B."/>
            <person name="Sorokin A."/>
            <person name="Tacconi E."/>
            <person name="Takagi T."/>
            <person name="Takahashi H."/>
            <person name="Takemaru K."/>
            <person name="Takeuchi M."/>
            <person name="Tamakoshi A."/>
            <person name="Tanaka T."/>
            <person name="Terpstra P."/>
            <person name="Tognoni A."/>
            <person name="Tosato V."/>
            <person name="Uchiyama S."/>
            <person name="Vandenbol M."/>
            <person name="Vannier F."/>
            <person name="Vassarotti A."/>
            <person name="Viari A."/>
            <person name="Wambutt R."/>
            <person name="Wedler E."/>
            <person name="Wedler H."/>
            <person name="Weitzenegger T."/>
            <person name="Winters P."/>
            <person name="Wipat A."/>
            <person name="Yamamoto H."/>
            <person name="Yamane K."/>
            <person name="Yasumoto K."/>
            <person name="Yata K."/>
            <person name="Yoshida K."/>
            <person name="Yoshikawa H.-F."/>
            <person name="Zumstein E."/>
            <person name="Yoshikawa H."/>
            <person name="Danchin A."/>
        </authorList>
    </citation>
    <scope>NUCLEOTIDE SEQUENCE [LARGE SCALE GENOMIC DNA]</scope>
    <source>
        <strain>168</strain>
    </source>
</reference>
<reference key="3">
    <citation type="journal article" date="2010" name="Biochemistry">
        <title>Structural and biochemical characterization of the cytochrome P450 CypX (CYP134A1) from Bacillus subtilis: a cyclo-L-leucyl-L-leucyl dipeptide oxidase.</title>
        <authorList>
            <person name="Cryle M.J."/>
            <person name="Bell S.G."/>
            <person name="Schlichting I."/>
        </authorList>
    </citation>
    <scope>X-RAY CRYSTALLOGRAPHY (2.66 ANGSTROMS) IN COMPLEX WITH HEME</scope>
    <scope>FUNCTION</scope>
    <scope>CATALYTIC ACTIVITY</scope>
    <scope>COFACTOR</scope>
    <scope>SUBSTRATE SPECIFICITY</scope>
    <scope>SUBUNIT</scope>
    <source>
        <strain>168</strain>
    </source>
</reference>
<accession>O34926</accession>
<evidence type="ECO:0000269" key="1">
    <source>
    </source>
</evidence>
<evidence type="ECO:0000305" key="2"/>
<evidence type="ECO:0007829" key="3">
    <source>
        <dbReference type="PDB" id="3NC3"/>
    </source>
</evidence>
<evidence type="ECO:0007829" key="4">
    <source>
        <dbReference type="PDB" id="3NC5"/>
    </source>
</evidence>
<evidence type="ECO:0007829" key="5">
    <source>
        <dbReference type="PDB" id="3NC6"/>
    </source>
</evidence>
<evidence type="ECO:0007829" key="6">
    <source>
        <dbReference type="PDB" id="3NC7"/>
    </source>
</evidence>
<feature type="chain" id="PRO_0000052234" description="Pulcherriminic acid synthase">
    <location>
        <begin position="1"/>
        <end position="405"/>
    </location>
</feature>
<feature type="binding site" evidence="1">
    <location>
        <position position="62"/>
    </location>
    <ligand>
        <name>heme</name>
        <dbReference type="ChEBI" id="CHEBI:30413"/>
    </ligand>
</feature>
<feature type="binding site" evidence="1">
    <location>
        <position position="229"/>
    </location>
    <ligand>
        <name>heme</name>
        <dbReference type="ChEBI" id="CHEBI:30413"/>
    </ligand>
</feature>
<feature type="binding site" evidence="1">
    <location>
        <position position="285"/>
    </location>
    <ligand>
        <name>heme</name>
        <dbReference type="ChEBI" id="CHEBI:30413"/>
    </ligand>
</feature>
<feature type="binding site" description="axial binding residue">
    <location>
        <position position="353"/>
    </location>
    <ligand>
        <name>heme</name>
        <dbReference type="ChEBI" id="CHEBI:30413"/>
    </ligand>
    <ligandPart>
        <name>Fe</name>
        <dbReference type="ChEBI" id="CHEBI:18248"/>
    </ligandPart>
</feature>
<feature type="helix" evidence="3">
    <location>
        <begin position="13"/>
        <end position="17"/>
    </location>
</feature>
<feature type="helix" evidence="3">
    <location>
        <begin position="19"/>
        <end position="21"/>
    </location>
</feature>
<feature type="helix" evidence="3">
    <location>
        <begin position="23"/>
        <end position="29"/>
    </location>
</feature>
<feature type="strand" evidence="3">
    <location>
        <begin position="31"/>
        <end position="35"/>
    </location>
</feature>
<feature type="turn" evidence="3">
    <location>
        <begin position="36"/>
        <end position="39"/>
    </location>
</feature>
<feature type="strand" evidence="3">
    <location>
        <begin position="40"/>
        <end position="43"/>
    </location>
</feature>
<feature type="helix" evidence="3">
    <location>
        <begin position="46"/>
        <end position="54"/>
    </location>
</feature>
<feature type="turn" evidence="3">
    <location>
        <begin position="56"/>
        <end position="58"/>
    </location>
</feature>
<feature type="strand" evidence="6">
    <location>
        <begin position="64"/>
        <end position="66"/>
    </location>
</feature>
<feature type="turn" evidence="5">
    <location>
        <begin position="69"/>
        <end position="71"/>
    </location>
</feature>
<feature type="helix" evidence="3">
    <location>
        <begin position="89"/>
        <end position="98"/>
    </location>
</feature>
<feature type="helix" evidence="3">
    <location>
        <begin position="100"/>
        <end position="116"/>
    </location>
</feature>
<feature type="turn" evidence="3">
    <location>
        <begin position="117"/>
        <end position="123"/>
    </location>
</feature>
<feature type="strand" evidence="3">
    <location>
        <begin position="124"/>
        <end position="126"/>
    </location>
</feature>
<feature type="helix" evidence="3">
    <location>
        <begin position="127"/>
        <end position="131"/>
    </location>
</feature>
<feature type="helix" evidence="3">
    <location>
        <begin position="132"/>
        <end position="143"/>
    </location>
</feature>
<feature type="helix" evidence="3">
    <location>
        <begin position="148"/>
        <end position="150"/>
    </location>
</feature>
<feature type="helix" evidence="3">
    <location>
        <begin position="151"/>
        <end position="166"/>
    </location>
</feature>
<feature type="helix" evidence="3">
    <location>
        <begin position="172"/>
        <end position="196"/>
    </location>
</feature>
<feature type="helix" evidence="3">
    <location>
        <begin position="204"/>
        <end position="208"/>
    </location>
</feature>
<feature type="helix" evidence="3">
    <location>
        <begin position="220"/>
        <end position="250"/>
    </location>
</feature>
<feature type="helix" evidence="3">
    <location>
        <begin position="253"/>
        <end position="261"/>
    </location>
</feature>
<feature type="helix" evidence="3">
    <location>
        <begin position="263"/>
        <end position="265"/>
    </location>
</feature>
<feature type="helix" evidence="3">
    <location>
        <begin position="266"/>
        <end position="276"/>
    </location>
</feature>
<feature type="strand" evidence="3">
    <location>
        <begin position="282"/>
        <end position="289"/>
    </location>
</feature>
<feature type="strand" evidence="3">
    <location>
        <begin position="291"/>
        <end position="295"/>
    </location>
</feature>
<feature type="strand" evidence="4">
    <location>
        <begin position="296"/>
        <end position="298"/>
    </location>
</feature>
<feature type="strand" evidence="3">
    <location>
        <begin position="303"/>
        <end position="307"/>
    </location>
</feature>
<feature type="helix" evidence="3">
    <location>
        <begin position="308"/>
        <end position="312"/>
    </location>
</feature>
<feature type="turn" evidence="3">
    <location>
        <begin position="315"/>
        <end position="317"/>
    </location>
</feature>
<feature type="strand" evidence="3">
    <location>
        <begin position="318"/>
        <end position="320"/>
    </location>
</feature>
<feature type="helix" evidence="3">
    <location>
        <begin position="333"/>
        <end position="335"/>
    </location>
</feature>
<feature type="strand" evidence="3">
    <location>
        <begin position="338"/>
        <end position="340"/>
    </location>
</feature>
<feature type="helix" evidence="3">
    <location>
        <begin position="349"/>
        <end position="351"/>
    </location>
</feature>
<feature type="helix" evidence="3">
    <location>
        <begin position="356"/>
        <end position="373"/>
    </location>
</feature>
<feature type="strand" evidence="3">
    <location>
        <begin position="390"/>
        <end position="392"/>
    </location>
</feature>
<feature type="strand" evidence="3">
    <location>
        <begin position="394"/>
        <end position="396"/>
    </location>
</feature>
<feature type="strand" evidence="3">
    <location>
        <begin position="399"/>
        <end position="401"/>
    </location>
</feature>